<dbReference type="EC" id="2.1.1.228" evidence="1"/>
<dbReference type="EMBL" id="CP000964">
    <property type="protein sequence ID" value="ACI11451.1"/>
    <property type="molecule type" value="Genomic_DNA"/>
</dbReference>
<dbReference type="SMR" id="B5XVK5"/>
<dbReference type="KEGG" id="kpe:KPK_1190"/>
<dbReference type="HOGENOM" id="CLU_047363_0_1_6"/>
<dbReference type="Proteomes" id="UP000001734">
    <property type="component" value="Chromosome"/>
</dbReference>
<dbReference type="GO" id="GO:0005829">
    <property type="term" value="C:cytosol"/>
    <property type="evidence" value="ECO:0007669"/>
    <property type="project" value="TreeGrafter"/>
</dbReference>
<dbReference type="GO" id="GO:0052906">
    <property type="term" value="F:tRNA (guanine(37)-N1)-methyltransferase activity"/>
    <property type="evidence" value="ECO:0007669"/>
    <property type="project" value="UniProtKB-UniRule"/>
</dbReference>
<dbReference type="GO" id="GO:0002939">
    <property type="term" value="P:tRNA N1-guanine methylation"/>
    <property type="evidence" value="ECO:0007669"/>
    <property type="project" value="TreeGrafter"/>
</dbReference>
<dbReference type="CDD" id="cd18080">
    <property type="entry name" value="TrmD-like"/>
    <property type="match status" value="1"/>
</dbReference>
<dbReference type="FunFam" id="1.10.1270.20:FF:000001">
    <property type="entry name" value="tRNA (guanine-N(1)-)-methyltransferase"/>
    <property type="match status" value="1"/>
</dbReference>
<dbReference type="FunFam" id="3.40.1280.10:FF:000001">
    <property type="entry name" value="tRNA (guanine-N(1)-)-methyltransferase"/>
    <property type="match status" value="1"/>
</dbReference>
<dbReference type="Gene3D" id="3.40.1280.10">
    <property type="match status" value="1"/>
</dbReference>
<dbReference type="Gene3D" id="1.10.1270.20">
    <property type="entry name" value="tRNA(m1g37)methyltransferase, domain 2"/>
    <property type="match status" value="1"/>
</dbReference>
<dbReference type="HAMAP" id="MF_00605">
    <property type="entry name" value="TrmD"/>
    <property type="match status" value="1"/>
</dbReference>
<dbReference type="InterPro" id="IPR029028">
    <property type="entry name" value="Alpha/beta_knot_MTases"/>
</dbReference>
<dbReference type="InterPro" id="IPR023148">
    <property type="entry name" value="tRNA_m1G_MeTrfase_C_sf"/>
</dbReference>
<dbReference type="InterPro" id="IPR002649">
    <property type="entry name" value="tRNA_m1G_MeTrfase_TrmD"/>
</dbReference>
<dbReference type="InterPro" id="IPR029026">
    <property type="entry name" value="tRNA_m1G_MTases_N"/>
</dbReference>
<dbReference type="InterPro" id="IPR016009">
    <property type="entry name" value="tRNA_MeTrfase_TRMD/TRM10"/>
</dbReference>
<dbReference type="NCBIfam" id="NF000648">
    <property type="entry name" value="PRK00026.1"/>
    <property type="match status" value="1"/>
</dbReference>
<dbReference type="NCBIfam" id="TIGR00088">
    <property type="entry name" value="trmD"/>
    <property type="match status" value="1"/>
</dbReference>
<dbReference type="PANTHER" id="PTHR46417">
    <property type="entry name" value="TRNA (GUANINE-N(1)-)-METHYLTRANSFERASE"/>
    <property type="match status" value="1"/>
</dbReference>
<dbReference type="PANTHER" id="PTHR46417:SF1">
    <property type="entry name" value="TRNA (GUANINE-N(1)-)-METHYLTRANSFERASE"/>
    <property type="match status" value="1"/>
</dbReference>
<dbReference type="Pfam" id="PF01746">
    <property type="entry name" value="tRNA_m1G_MT"/>
    <property type="match status" value="1"/>
</dbReference>
<dbReference type="PIRSF" id="PIRSF000386">
    <property type="entry name" value="tRNA_mtase"/>
    <property type="match status" value="1"/>
</dbReference>
<dbReference type="SUPFAM" id="SSF75217">
    <property type="entry name" value="alpha/beta knot"/>
    <property type="match status" value="1"/>
</dbReference>
<feature type="chain" id="PRO_1000130180" description="tRNA (guanine-N(1)-)-methyltransferase">
    <location>
        <begin position="1"/>
        <end position="255"/>
    </location>
</feature>
<feature type="binding site" evidence="1">
    <location>
        <position position="113"/>
    </location>
    <ligand>
        <name>S-adenosyl-L-methionine</name>
        <dbReference type="ChEBI" id="CHEBI:59789"/>
    </ligand>
</feature>
<feature type="binding site" evidence="1">
    <location>
        <begin position="133"/>
        <end position="138"/>
    </location>
    <ligand>
        <name>S-adenosyl-L-methionine</name>
        <dbReference type="ChEBI" id="CHEBI:59789"/>
    </ligand>
</feature>
<proteinExistence type="inferred from homology"/>
<name>TRMD_KLEP3</name>
<organism>
    <name type="scientific">Klebsiella pneumoniae (strain 342)</name>
    <dbReference type="NCBI Taxonomy" id="507522"/>
    <lineage>
        <taxon>Bacteria</taxon>
        <taxon>Pseudomonadati</taxon>
        <taxon>Pseudomonadota</taxon>
        <taxon>Gammaproteobacteria</taxon>
        <taxon>Enterobacterales</taxon>
        <taxon>Enterobacteriaceae</taxon>
        <taxon>Klebsiella/Raoultella group</taxon>
        <taxon>Klebsiella</taxon>
        <taxon>Klebsiella pneumoniae complex</taxon>
    </lineage>
</organism>
<comment type="function">
    <text evidence="1">Specifically methylates guanosine-37 in various tRNAs.</text>
</comment>
<comment type="catalytic activity">
    <reaction evidence="1">
        <text>guanosine(37) in tRNA + S-adenosyl-L-methionine = N(1)-methylguanosine(37) in tRNA + S-adenosyl-L-homocysteine + H(+)</text>
        <dbReference type="Rhea" id="RHEA:36899"/>
        <dbReference type="Rhea" id="RHEA-COMP:10145"/>
        <dbReference type="Rhea" id="RHEA-COMP:10147"/>
        <dbReference type="ChEBI" id="CHEBI:15378"/>
        <dbReference type="ChEBI" id="CHEBI:57856"/>
        <dbReference type="ChEBI" id="CHEBI:59789"/>
        <dbReference type="ChEBI" id="CHEBI:73542"/>
        <dbReference type="ChEBI" id="CHEBI:74269"/>
        <dbReference type="EC" id="2.1.1.228"/>
    </reaction>
</comment>
<comment type="subunit">
    <text evidence="1">Homodimer.</text>
</comment>
<comment type="subcellular location">
    <subcellularLocation>
        <location evidence="1">Cytoplasm</location>
    </subcellularLocation>
</comment>
<comment type="similarity">
    <text evidence="1">Belongs to the RNA methyltransferase TrmD family.</text>
</comment>
<evidence type="ECO:0000255" key="1">
    <source>
        <dbReference type="HAMAP-Rule" id="MF_00605"/>
    </source>
</evidence>
<gene>
    <name evidence="1" type="primary">trmD</name>
    <name type="ordered locus">KPK_1190</name>
</gene>
<reference key="1">
    <citation type="journal article" date="2008" name="PLoS Genet.">
        <title>Complete genome sequence of the N2-fixing broad host range endophyte Klebsiella pneumoniae 342 and virulence predictions verified in mice.</title>
        <authorList>
            <person name="Fouts D.E."/>
            <person name="Tyler H.L."/>
            <person name="DeBoy R.T."/>
            <person name="Daugherty S."/>
            <person name="Ren Q."/>
            <person name="Badger J.H."/>
            <person name="Durkin A.S."/>
            <person name="Huot H."/>
            <person name="Shrivastava S."/>
            <person name="Kothari S."/>
            <person name="Dodson R.J."/>
            <person name="Mohamoud Y."/>
            <person name="Khouri H."/>
            <person name="Roesch L.F.W."/>
            <person name="Krogfelt K.A."/>
            <person name="Struve C."/>
            <person name="Triplett E.W."/>
            <person name="Methe B.A."/>
        </authorList>
    </citation>
    <scope>NUCLEOTIDE SEQUENCE [LARGE SCALE GENOMIC DNA]</scope>
    <source>
        <strain>342</strain>
    </source>
</reference>
<protein>
    <recommendedName>
        <fullName evidence="1">tRNA (guanine-N(1)-)-methyltransferase</fullName>
        <ecNumber evidence="1">2.1.1.228</ecNumber>
    </recommendedName>
    <alternativeName>
        <fullName evidence="1">M1G-methyltransferase</fullName>
    </alternativeName>
    <alternativeName>
        <fullName evidence="1">tRNA [GM37] methyltransferase</fullName>
    </alternativeName>
</protein>
<accession>B5XVK5</accession>
<keyword id="KW-0963">Cytoplasm</keyword>
<keyword id="KW-0489">Methyltransferase</keyword>
<keyword id="KW-0949">S-adenosyl-L-methionine</keyword>
<keyword id="KW-0808">Transferase</keyword>
<keyword id="KW-0819">tRNA processing</keyword>
<sequence>MWIGIISLFPEMFRAITDYGVTGRAVKNGLLSIESWSPRDFAHDRHRTVDDRPYGGGPGMLMMVQPLRDAIHAAKAAAGEGAKVIYLSPQGRKLDQAGVSELATNQKLILVCGRYEGIDERVIQTEIDEEWSIGDYVLSGGELPAMTLIDSVSRFIPGVLGHEASATEDSFADGLLDCPHYTRPEVLEEMEVPPVLLSGNHAEIRRWRLKQSLGRTWLRRPELLENLALTEEQAKLLAQFKSEHAQQQHKHDGQA</sequence>